<name>RR8_SACHY</name>
<reference key="1">
    <citation type="journal article" date="2004" name="Curr. Genet.">
        <title>Structural features and transcript-editing analysis of sugarcane (Saccharum officinarum L.) chloroplast genome.</title>
        <authorList>
            <person name="Calsa T. Jr."/>
            <person name="Carraro D.M."/>
            <person name="Benatti M.R."/>
            <person name="Barbosa A.C."/>
            <person name="Kitajima J.P."/>
            <person name="Carrer H."/>
        </authorList>
    </citation>
    <scope>NUCLEOTIDE SEQUENCE [LARGE SCALE GENOMIC DNA]</scope>
    <scope>RNA EDITING</scope>
    <source>
        <strain>cv. SP-80-3280</strain>
    </source>
</reference>
<organism>
    <name type="scientific">Saccharum hybrid</name>
    <name type="common">Sugarcane</name>
    <dbReference type="NCBI Taxonomy" id="15819"/>
    <lineage>
        <taxon>Eukaryota</taxon>
        <taxon>Viridiplantae</taxon>
        <taxon>Streptophyta</taxon>
        <taxon>Embryophyta</taxon>
        <taxon>Tracheophyta</taxon>
        <taxon>Spermatophyta</taxon>
        <taxon>Magnoliopsida</taxon>
        <taxon>Liliopsida</taxon>
        <taxon>Poales</taxon>
        <taxon>Poaceae</taxon>
        <taxon>PACMAD clade</taxon>
        <taxon>Panicoideae</taxon>
        <taxon>Andropogonodae</taxon>
        <taxon>Andropogoneae</taxon>
        <taxon>Saccharinae</taxon>
        <taxon>Saccharum</taxon>
    </lineage>
</organism>
<feature type="chain" id="PRO_0000126593" description="Small ribosomal subunit protein uS8c">
    <location>
        <begin position="1"/>
        <end position="136"/>
    </location>
</feature>
<proteinExistence type="evidence at transcript level"/>
<sequence>MGKDTIADLLTSIRNADMNKKGTVRVVSTNITENIVKILLREGFIESVRKHQESNRYFLVLTLRHQRRKTRKGIYRTRTFLKRISRPGLRIYANYQGIPKVLGGMGIAILSTSRGIMTDREARLNRIGGEVLCYIW</sequence>
<accession>Q6L366</accession>
<protein>
    <recommendedName>
        <fullName evidence="3">Small ribosomal subunit protein uS8c</fullName>
    </recommendedName>
    <alternativeName>
        <fullName>30S ribosomal protein S8, chloroplastic</fullName>
    </alternativeName>
</protein>
<evidence type="ECO:0000250" key="1"/>
<evidence type="ECO:0000269" key="2">
    <source>
    </source>
</evidence>
<evidence type="ECO:0000305" key="3"/>
<geneLocation type="chloroplast"/>
<comment type="function">
    <text evidence="1">One of the primary rRNA binding proteins, it binds directly to 16S rRNA central domain where it helps coordinate assembly of the platform of the 30S subunit.</text>
</comment>
<comment type="subunit">
    <text evidence="1">Part of the 30S ribosomal subunit.</text>
</comment>
<comment type="subcellular location">
    <subcellularLocation>
        <location>Plastid</location>
        <location>Chloroplast</location>
    </subcellularLocation>
</comment>
<comment type="RNA editing">
    <location>
        <position position="61" evidence="2"/>
    </location>
</comment>
<comment type="similarity">
    <text evidence="3">Belongs to the universal ribosomal protein uS8 family.</text>
</comment>
<gene>
    <name type="primary">rps8</name>
    <name type="ordered locus">PS161</name>
</gene>
<dbReference type="EMBL" id="AE009947">
    <property type="protein sequence ID" value="AAT44727.1"/>
    <property type="status" value="ALT_SEQ"/>
    <property type="molecule type" value="Genomic_DNA"/>
</dbReference>
<dbReference type="SMR" id="Q6L366"/>
<dbReference type="GO" id="GO:0009507">
    <property type="term" value="C:chloroplast"/>
    <property type="evidence" value="ECO:0007669"/>
    <property type="project" value="UniProtKB-SubCell"/>
</dbReference>
<dbReference type="GO" id="GO:1990904">
    <property type="term" value="C:ribonucleoprotein complex"/>
    <property type="evidence" value="ECO:0007669"/>
    <property type="project" value="UniProtKB-KW"/>
</dbReference>
<dbReference type="GO" id="GO:0005840">
    <property type="term" value="C:ribosome"/>
    <property type="evidence" value="ECO:0007669"/>
    <property type="project" value="UniProtKB-KW"/>
</dbReference>
<dbReference type="GO" id="GO:0019843">
    <property type="term" value="F:rRNA binding"/>
    <property type="evidence" value="ECO:0007669"/>
    <property type="project" value="UniProtKB-UniRule"/>
</dbReference>
<dbReference type="GO" id="GO:0003735">
    <property type="term" value="F:structural constituent of ribosome"/>
    <property type="evidence" value="ECO:0007669"/>
    <property type="project" value="InterPro"/>
</dbReference>
<dbReference type="GO" id="GO:0006412">
    <property type="term" value="P:translation"/>
    <property type="evidence" value="ECO:0007669"/>
    <property type="project" value="UniProtKB-UniRule"/>
</dbReference>
<dbReference type="FunFam" id="3.30.1490.10:FF:000001">
    <property type="entry name" value="30S ribosomal protein S8"/>
    <property type="match status" value="1"/>
</dbReference>
<dbReference type="FunFam" id="3.30.1370.30:FF:000004">
    <property type="entry name" value="30S ribosomal protein S8, chloroplastic"/>
    <property type="match status" value="1"/>
</dbReference>
<dbReference type="Gene3D" id="3.30.1370.30">
    <property type="match status" value="1"/>
</dbReference>
<dbReference type="Gene3D" id="3.30.1490.10">
    <property type="match status" value="1"/>
</dbReference>
<dbReference type="HAMAP" id="MF_01302_B">
    <property type="entry name" value="Ribosomal_uS8_B"/>
    <property type="match status" value="1"/>
</dbReference>
<dbReference type="InterPro" id="IPR000630">
    <property type="entry name" value="Ribosomal_uS8"/>
</dbReference>
<dbReference type="InterPro" id="IPR047863">
    <property type="entry name" value="Ribosomal_uS8_CS"/>
</dbReference>
<dbReference type="InterPro" id="IPR035987">
    <property type="entry name" value="Ribosomal_uS8_sf"/>
</dbReference>
<dbReference type="NCBIfam" id="NF001109">
    <property type="entry name" value="PRK00136.1"/>
    <property type="match status" value="1"/>
</dbReference>
<dbReference type="PANTHER" id="PTHR11758">
    <property type="entry name" value="40S RIBOSOMAL PROTEIN S15A"/>
    <property type="match status" value="1"/>
</dbReference>
<dbReference type="Pfam" id="PF00410">
    <property type="entry name" value="Ribosomal_S8"/>
    <property type="match status" value="1"/>
</dbReference>
<dbReference type="SUPFAM" id="SSF56047">
    <property type="entry name" value="Ribosomal protein S8"/>
    <property type="match status" value="1"/>
</dbReference>
<dbReference type="PROSITE" id="PS00053">
    <property type="entry name" value="RIBOSOMAL_S8"/>
    <property type="match status" value="1"/>
</dbReference>
<keyword id="KW-0150">Chloroplast</keyword>
<keyword id="KW-0934">Plastid</keyword>
<keyword id="KW-0687">Ribonucleoprotein</keyword>
<keyword id="KW-0689">Ribosomal protein</keyword>
<keyword id="KW-0691">RNA editing</keyword>
<keyword id="KW-0694">RNA-binding</keyword>
<keyword id="KW-0699">rRNA-binding</keyword>